<evidence type="ECO:0000255" key="1">
    <source>
        <dbReference type="HAMAP-Rule" id="MF_00131"/>
    </source>
</evidence>
<feature type="chain" id="PRO_1000018295" description="Tryptophan synthase alpha chain">
    <location>
        <begin position="1"/>
        <end position="259"/>
    </location>
</feature>
<feature type="active site" description="Proton acceptor" evidence="1">
    <location>
        <position position="52"/>
    </location>
</feature>
<feature type="active site" description="Proton acceptor" evidence="1">
    <location>
        <position position="63"/>
    </location>
</feature>
<name>TRPA_STRSV</name>
<organism>
    <name type="scientific">Streptococcus sanguinis (strain SK36)</name>
    <dbReference type="NCBI Taxonomy" id="388919"/>
    <lineage>
        <taxon>Bacteria</taxon>
        <taxon>Bacillati</taxon>
        <taxon>Bacillota</taxon>
        <taxon>Bacilli</taxon>
        <taxon>Lactobacillales</taxon>
        <taxon>Streptococcaceae</taxon>
        <taxon>Streptococcus</taxon>
    </lineage>
</organism>
<proteinExistence type="inferred from homology"/>
<comment type="function">
    <text evidence="1">The alpha subunit is responsible for the aldol cleavage of indoleglycerol phosphate to indole and glyceraldehyde 3-phosphate.</text>
</comment>
<comment type="catalytic activity">
    <reaction evidence="1">
        <text>(1S,2R)-1-C-(indol-3-yl)glycerol 3-phosphate + L-serine = D-glyceraldehyde 3-phosphate + L-tryptophan + H2O</text>
        <dbReference type="Rhea" id="RHEA:10532"/>
        <dbReference type="ChEBI" id="CHEBI:15377"/>
        <dbReference type="ChEBI" id="CHEBI:33384"/>
        <dbReference type="ChEBI" id="CHEBI:57912"/>
        <dbReference type="ChEBI" id="CHEBI:58866"/>
        <dbReference type="ChEBI" id="CHEBI:59776"/>
        <dbReference type="EC" id="4.2.1.20"/>
    </reaction>
</comment>
<comment type="pathway">
    <text evidence="1">Amino-acid biosynthesis; L-tryptophan biosynthesis; L-tryptophan from chorismate: step 5/5.</text>
</comment>
<comment type="subunit">
    <text evidence="1">Tetramer of two alpha and two beta chains.</text>
</comment>
<comment type="similarity">
    <text evidence="1">Belongs to the TrpA family.</text>
</comment>
<sequence>MTKTLTQHLETIKREGKGIFLPYIMAGDHEKGLAGLPETIAFLENLGVSAIEIGLPFSDPVADGPVIEEAGLRSLGHHTSAKSLIASLQKLDTQLPLIIMTYFNPIFQYGLKDFIKDLARTPVKGLIIPDLPYEHRDFILPLLEDSDIALVPLVSLTTGLERQQELIKEAEGFIYAVAINGVTGKSGSYRNDLDQHLSKLHDIAEIPVLTGFGVSTLEDVDRFNQVSDGVIVGSKIVKALHEKDASIAAFIQEAAAYKK</sequence>
<accession>A3CLM2</accession>
<gene>
    <name evidence="1" type="primary">trpA</name>
    <name type="ordered locus">SSA_0638</name>
</gene>
<keyword id="KW-0028">Amino-acid biosynthesis</keyword>
<keyword id="KW-0057">Aromatic amino acid biosynthesis</keyword>
<keyword id="KW-0456">Lyase</keyword>
<keyword id="KW-1185">Reference proteome</keyword>
<keyword id="KW-0822">Tryptophan biosynthesis</keyword>
<dbReference type="EC" id="4.2.1.20" evidence="1"/>
<dbReference type="EMBL" id="CP000387">
    <property type="protein sequence ID" value="ABN44077.1"/>
    <property type="molecule type" value="Genomic_DNA"/>
</dbReference>
<dbReference type="RefSeq" id="WP_011836638.1">
    <property type="nucleotide sequence ID" value="NC_009009.1"/>
</dbReference>
<dbReference type="RefSeq" id="YP_001034627.1">
    <property type="nucleotide sequence ID" value="NC_009009.1"/>
</dbReference>
<dbReference type="SMR" id="A3CLM2"/>
<dbReference type="STRING" id="388919.SSA_0638"/>
<dbReference type="KEGG" id="ssa:SSA_0638"/>
<dbReference type="PATRIC" id="fig|388919.9.peg.614"/>
<dbReference type="eggNOG" id="COG0159">
    <property type="taxonomic scope" value="Bacteria"/>
</dbReference>
<dbReference type="HOGENOM" id="CLU_016734_0_0_9"/>
<dbReference type="OrthoDB" id="9804578at2"/>
<dbReference type="UniPathway" id="UPA00035">
    <property type="reaction ID" value="UER00044"/>
</dbReference>
<dbReference type="Proteomes" id="UP000002148">
    <property type="component" value="Chromosome"/>
</dbReference>
<dbReference type="GO" id="GO:0005829">
    <property type="term" value="C:cytosol"/>
    <property type="evidence" value="ECO:0007669"/>
    <property type="project" value="TreeGrafter"/>
</dbReference>
<dbReference type="GO" id="GO:0004834">
    <property type="term" value="F:tryptophan synthase activity"/>
    <property type="evidence" value="ECO:0007669"/>
    <property type="project" value="UniProtKB-UniRule"/>
</dbReference>
<dbReference type="CDD" id="cd04724">
    <property type="entry name" value="Tryptophan_synthase_alpha"/>
    <property type="match status" value="1"/>
</dbReference>
<dbReference type="Gene3D" id="3.20.20.70">
    <property type="entry name" value="Aldolase class I"/>
    <property type="match status" value="1"/>
</dbReference>
<dbReference type="HAMAP" id="MF_00131">
    <property type="entry name" value="Trp_synth_alpha"/>
    <property type="match status" value="1"/>
</dbReference>
<dbReference type="InterPro" id="IPR013785">
    <property type="entry name" value="Aldolase_TIM"/>
</dbReference>
<dbReference type="InterPro" id="IPR011060">
    <property type="entry name" value="RibuloseP-bd_barrel"/>
</dbReference>
<dbReference type="InterPro" id="IPR018204">
    <property type="entry name" value="Trp_synthase_alpha_AS"/>
</dbReference>
<dbReference type="InterPro" id="IPR002028">
    <property type="entry name" value="Trp_synthase_suA"/>
</dbReference>
<dbReference type="NCBIfam" id="TIGR00262">
    <property type="entry name" value="trpA"/>
    <property type="match status" value="1"/>
</dbReference>
<dbReference type="PANTHER" id="PTHR43406:SF1">
    <property type="entry name" value="TRYPTOPHAN SYNTHASE ALPHA CHAIN, CHLOROPLASTIC"/>
    <property type="match status" value="1"/>
</dbReference>
<dbReference type="PANTHER" id="PTHR43406">
    <property type="entry name" value="TRYPTOPHAN SYNTHASE, ALPHA CHAIN"/>
    <property type="match status" value="1"/>
</dbReference>
<dbReference type="Pfam" id="PF00290">
    <property type="entry name" value="Trp_syntA"/>
    <property type="match status" value="1"/>
</dbReference>
<dbReference type="SUPFAM" id="SSF51366">
    <property type="entry name" value="Ribulose-phoshate binding barrel"/>
    <property type="match status" value="1"/>
</dbReference>
<dbReference type="PROSITE" id="PS00167">
    <property type="entry name" value="TRP_SYNTHASE_ALPHA"/>
    <property type="match status" value="1"/>
</dbReference>
<protein>
    <recommendedName>
        <fullName evidence="1">Tryptophan synthase alpha chain</fullName>
        <ecNumber evidence="1">4.2.1.20</ecNumber>
    </recommendedName>
</protein>
<reference key="1">
    <citation type="journal article" date="2007" name="J. Bacteriol.">
        <title>Genome of the opportunistic pathogen Streptococcus sanguinis.</title>
        <authorList>
            <person name="Xu P."/>
            <person name="Alves J.M."/>
            <person name="Kitten T."/>
            <person name="Brown A."/>
            <person name="Chen Z."/>
            <person name="Ozaki L.S."/>
            <person name="Manque P."/>
            <person name="Ge X."/>
            <person name="Serrano M.G."/>
            <person name="Puiu D."/>
            <person name="Hendricks S."/>
            <person name="Wang Y."/>
            <person name="Chaplin M.D."/>
            <person name="Akan D."/>
            <person name="Paik S."/>
            <person name="Peterson D.L."/>
            <person name="Macrina F.L."/>
            <person name="Buck G.A."/>
        </authorList>
    </citation>
    <scope>NUCLEOTIDE SEQUENCE [LARGE SCALE GENOMIC DNA]</scope>
    <source>
        <strain>SK36</strain>
    </source>
</reference>